<sequence>MTPDVRPLVAGNWKMNGTRASLDQIKAIAEGVRPPLADKVEALICPPTTLLYVATALCTDSPLAIGAQDCHQKPSGAHTGDISAEMIADSFGTYVIVGHSERRTDHAETDHLVRAKAEAAFAAELTAIICIGETADERRAGQELDVIKRQLSASVPDAATAENTVIAYEPIWAIGTGVTPTSGDVEKAHAFMRAELVSRFGDEGRKMRLLYGGSVKPANAGELLGIANVDGALIGGASLKAADFLAIYRAYEALLA</sequence>
<proteinExistence type="inferred from homology"/>
<accession>Q2K869</accession>
<gene>
    <name evidence="1" type="primary">tpiA</name>
    <name type="synonym">tpiAch</name>
    <name type="ordered locus">RHE_CH02186</name>
</gene>
<comment type="function">
    <text evidence="1">Involved in the gluconeogenesis. Catalyzes stereospecifically the conversion of dihydroxyacetone phosphate (DHAP) to D-glyceraldehyde-3-phosphate (G3P).</text>
</comment>
<comment type="catalytic activity">
    <reaction evidence="1">
        <text>D-glyceraldehyde 3-phosphate = dihydroxyacetone phosphate</text>
        <dbReference type="Rhea" id="RHEA:18585"/>
        <dbReference type="ChEBI" id="CHEBI:57642"/>
        <dbReference type="ChEBI" id="CHEBI:59776"/>
        <dbReference type="EC" id="5.3.1.1"/>
    </reaction>
</comment>
<comment type="pathway">
    <text evidence="1">Carbohydrate biosynthesis; gluconeogenesis.</text>
</comment>
<comment type="pathway">
    <text evidence="1">Carbohydrate degradation; glycolysis; D-glyceraldehyde 3-phosphate from glycerone phosphate: step 1/1.</text>
</comment>
<comment type="subunit">
    <text evidence="1">Homodimer.</text>
</comment>
<comment type="subcellular location">
    <subcellularLocation>
        <location evidence="1">Cytoplasm</location>
    </subcellularLocation>
</comment>
<comment type="similarity">
    <text evidence="1">Belongs to the triosephosphate isomerase family.</text>
</comment>
<comment type="sequence caution" evidence="2">
    <conflict type="erroneous initiation">
        <sequence resource="EMBL-CDS" id="ABC90967"/>
    </conflict>
</comment>
<evidence type="ECO:0000255" key="1">
    <source>
        <dbReference type="HAMAP-Rule" id="MF_00147"/>
    </source>
</evidence>
<evidence type="ECO:0000305" key="2"/>
<dbReference type="EC" id="5.3.1.1" evidence="1"/>
<dbReference type="EMBL" id="CP000133">
    <property type="protein sequence ID" value="ABC90967.1"/>
    <property type="status" value="ALT_INIT"/>
    <property type="molecule type" value="Genomic_DNA"/>
</dbReference>
<dbReference type="RefSeq" id="WP_020921334.1">
    <property type="nucleotide sequence ID" value="NC_007761.1"/>
</dbReference>
<dbReference type="SMR" id="Q2K869"/>
<dbReference type="KEGG" id="ret:RHE_CH02186"/>
<dbReference type="eggNOG" id="COG0149">
    <property type="taxonomic scope" value="Bacteria"/>
</dbReference>
<dbReference type="HOGENOM" id="CLU_024251_2_1_5"/>
<dbReference type="OrthoDB" id="9809429at2"/>
<dbReference type="UniPathway" id="UPA00109">
    <property type="reaction ID" value="UER00189"/>
</dbReference>
<dbReference type="UniPathway" id="UPA00138"/>
<dbReference type="Proteomes" id="UP000001936">
    <property type="component" value="Chromosome"/>
</dbReference>
<dbReference type="GO" id="GO:0005829">
    <property type="term" value="C:cytosol"/>
    <property type="evidence" value="ECO:0007669"/>
    <property type="project" value="TreeGrafter"/>
</dbReference>
<dbReference type="GO" id="GO:0004807">
    <property type="term" value="F:triose-phosphate isomerase activity"/>
    <property type="evidence" value="ECO:0007669"/>
    <property type="project" value="UniProtKB-UniRule"/>
</dbReference>
<dbReference type="GO" id="GO:0006094">
    <property type="term" value="P:gluconeogenesis"/>
    <property type="evidence" value="ECO:0007669"/>
    <property type="project" value="UniProtKB-UniRule"/>
</dbReference>
<dbReference type="GO" id="GO:0046166">
    <property type="term" value="P:glyceraldehyde-3-phosphate biosynthetic process"/>
    <property type="evidence" value="ECO:0007669"/>
    <property type="project" value="TreeGrafter"/>
</dbReference>
<dbReference type="GO" id="GO:0019563">
    <property type="term" value="P:glycerol catabolic process"/>
    <property type="evidence" value="ECO:0007669"/>
    <property type="project" value="TreeGrafter"/>
</dbReference>
<dbReference type="GO" id="GO:0006096">
    <property type="term" value="P:glycolytic process"/>
    <property type="evidence" value="ECO:0007669"/>
    <property type="project" value="UniProtKB-UniRule"/>
</dbReference>
<dbReference type="CDD" id="cd00311">
    <property type="entry name" value="TIM"/>
    <property type="match status" value="1"/>
</dbReference>
<dbReference type="FunFam" id="3.20.20.70:FF:000016">
    <property type="entry name" value="Triosephosphate isomerase"/>
    <property type="match status" value="1"/>
</dbReference>
<dbReference type="Gene3D" id="3.20.20.70">
    <property type="entry name" value="Aldolase class I"/>
    <property type="match status" value="1"/>
</dbReference>
<dbReference type="HAMAP" id="MF_00147_B">
    <property type="entry name" value="TIM_B"/>
    <property type="match status" value="1"/>
</dbReference>
<dbReference type="InterPro" id="IPR013785">
    <property type="entry name" value="Aldolase_TIM"/>
</dbReference>
<dbReference type="InterPro" id="IPR035990">
    <property type="entry name" value="TIM_sf"/>
</dbReference>
<dbReference type="InterPro" id="IPR022896">
    <property type="entry name" value="TrioseP_Isoase_bac/euk"/>
</dbReference>
<dbReference type="InterPro" id="IPR000652">
    <property type="entry name" value="Triosephosphate_isomerase"/>
</dbReference>
<dbReference type="InterPro" id="IPR020861">
    <property type="entry name" value="Triosephosphate_isomerase_AS"/>
</dbReference>
<dbReference type="NCBIfam" id="TIGR00419">
    <property type="entry name" value="tim"/>
    <property type="match status" value="1"/>
</dbReference>
<dbReference type="PANTHER" id="PTHR21139">
    <property type="entry name" value="TRIOSEPHOSPHATE ISOMERASE"/>
    <property type="match status" value="1"/>
</dbReference>
<dbReference type="PANTHER" id="PTHR21139:SF42">
    <property type="entry name" value="TRIOSEPHOSPHATE ISOMERASE"/>
    <property type="match status" value="1"/>
</dbReference>
<dbReference type="Pfam" id="PF00121">
    <property type="entry name" value="TIM"/>
    <property type="match status" value="1"/>
</dbReference>
<dbReference type="SUPFAM" id="SSF51351">
    <property type="entry name" value="Triosephosphate isomerase (TIM)"/>
    <property type="match status" value="1"/>
</dbReference>
<dbReference type="PROSITE" id="PS00171">
    <property type="entry name" value="TIM_1"/>
    <property type="match status" value="1"/>
</dbReference>
<dbReference type="PROSITE" id="PS51440">
    <property type="entry name" value="TIM_2"/>
    <property type="match status" value="1"/>
</dbReference>
<keyword id="KW-0963">Cytoplasm</keyword>
<keyword id="KW-0312">Gluconeogenesis</keyword>
<keyword id="KW-0324">Glycolysis</keyword>
<keyword id="KW-0413">Isomerase</keyword>
<keyword id="KW-1185">Reference proteome</keyword>
<feature type="chain" id="PRO_0000236165" description="Triosephosphate isomerase">
    <location>
        <begin position="1"/>
        <end position="256"/>
    </location>
</feature>
<feature type="active site" description="Electrophile" evidence="1">
    <location>
        <position position="99"/>
    </location>
</feature>
<feature type="active site" description="Proton acceptor" evidence="1">
    <location>
        <position position="169"/>
    </location>
</feature>
<feature type="binding site" evidence="1">
    <location>
        <begin position="12"/>
        <end position="14"/>
    </location>
    <ligand>
        <name>substrate</name>
    </ligand>
</feature>
<feature type="binding site" evidence="1">
    <location>
        <position position="175"/>
    </location>
    <ligand>
        <name>substrate</name>
    </ligand>
</feature>
<feature type="binding site" evidence="1">
    <location>
        <position position="214"/>
    </location>
    <ligand>
        <name>substrate</name>
    </ligand>
</feature>
<feature type="binding site" evidence="1">
    <location>
        <begin position="235"/>
        <end position="236"/>
    </location>
    <ligand>
        <name>substrate</name>
    </ligand>
</feature>
<name>TPIS1_RHIEC</name>
<organism>
    <name type="scientific">Rhizobium etli (strain ATCC 51251 / DSM 11541 / JCM 21823 / NBRC 15573 / CFN 42)</name>
    <dbReference type="NCBI Taxonomy" id="347834"/>
    <lineage>
        <taxon>Bacteria</taxon>
        <taxon>Pseudomonadati</taxon>
        <taxon>Pseudomonadota</taxon>
        <taxon>Alphaproteobacteria</taxon>
        <taxon>Hyphomicrobiales</taxon>
        <taxon>Rhizobiaceae</taxon>
        <taxon>Rhizobium/Agrobacterium group</taxon>
        <taxon>Rhizobium</taxon>
    </lineage>
</organism>
<protein>
    <recommendedName>
        <fullName evidence="1">Triosephosphate isomerase</fullName>
        <shortName evidence="1">TIM</shortName>
        <shortName evidence="1">TPI</shortName>
        <ecNumber evidence="1">5.3.1.1</ecNumber>
    </recommendedName>
    <alternativeName>
        <fullName evidence="1">Triose-phosphate isomerase</fullName>
    </alternativeName>
</protein>
<reference key="1">
    <citation type="journal article" date="2006" name="Proc. Natl. Acad. Sci. U.S.A.">
        <title>The partitioned Rhizobium etli genome: genetic and metabolic redundancy in seven interacting replicons.</title>
        <authorList>
            <person name="Gonzalez V."/>
            <person name="Santamaria R.I."/>
            <person name="Bustos P."/>
            <person name="Hernandez-Gonzalez I."/>
            <person name="Medrano-Soto A."/>
            <person name="Moreno-Hagelsieb G."/>
            <person name="Janga S.C."/>
            <person name="Ramirez M.A."/>
            <person name="Jimenez-Jacinto V."/>
            <person name="Collado-Vides J."/>
            <person name="Davila G."/>
        </authorList>
    </citation>
    <scope>NUCLEOTIDE SEQUENCE [LARGE SCALE GENOMIC DNA]</scope>
    <source>
        <strain>ATCC 51251 / DSM 11541 / JCM 21823 / NBRC 15573 / CFN 42</strain>
    </source>
</reference>